<name>RL18A_HALUD</name>
<proteinExistence type="inferred from homology"/>
<dbReference type="EMBL" id="CP001687">
    <property type="protein sequence ID" value="ACV11506.1"/>
    <property type="molecule type" value="Genomic_DNA"/>
</dbReference>
<dbReference type="RefSeq" id="WP_015789080.1">
    <property type="nucleotide sequence ID" value="NC_013158.1"/>
</dbReference>
<dbReference type="SMR" id="C7NNA6"/>
<dbReference type="STRING" id="519442.Huta_1330"/>
<dbReference type="GeneID" id="8383607"/>
<dbReference type="KEGG" id="hut:Huta_1330"/>
<dbReference type="eggNOG" id="arCOG04175">
    <property type="taxonomic scope" value="Archaea"/>
</dbReference>
<dbReference type="HOGENOM" id="CLU_177460_1_0_2"/>
<dbReference type="OrthoDB" id="191241at2157"/>
<dbReference type="Proteomes" id="UP000002071">
    <property type="component" value="Chromosome"/>
</dbReference>
<dbReference type="GO" id="GO:1990904">
    <property type="term" value="C:ribonucleoprotein complex"/>
    <property type="evidence" value="ECO:0007669"/>
    <property type="project" value="UniProtKB-KW"/>
</dbReference>
<dbReference type="GO" id="GO:0005840">
    <property type="term" value="C:ribosome"/>
    <property type="evidence" value="ECO:0007669"/>
    <property type="project" value="UniProtKB-KW"/>
</dbReference>
<dbReference type="GO" id="GO:0070180">
    <property type="term" value="F:large ribosomal subunit rRNA binding"/>
    <property type="evidence" value="ECO:0007669"/>
    <property type="project" value="UniProtKB-UniRule"/>
</dbReference>
<dbReference type="GO" id="GO:0003735">
    <property type="term" value="F:structural constituent of ribosome"/>
    <property type="evidence" value="ECO:0007669"/>
    <property type="project" value="InterPro"/>
</dbReference>
<dbReference type="GO" id="GO:0006412">
    <property type="term" value="P:translation"/>
    <property type="evidence" value="ECO:0007669"/>
    <property type="project" value="UniProtKB-UniRule"/>
</dbReference>
<dbReference type="Gene3D" id="3.10.20.10">
    <property type="match status" value="1"/>
</dbReference>
<dbReference type="HAMAP" id="MF_00273">
    <property type="entry name" value="Ribosomal_eL20"/>
    <property type="match status" value="1"/>
</dbReference>
<dbReference type="InterPro" id="IPR028877">
    <property type="entry name" value="Ribosomal_eL20"/>
</dbReference>
<dbReference type="InterPro" id="IPR023573">
    <property type="entry name" value="Ribosomal_eL20_dom"/>
</dbReference>
<dbReference type="NCBIfam" id="NF001981">
    <property type="entry name" value="PRK00773.1-1"/>
    <property type="match status" value="1"/>
</dbReference>
<dbReference type="Pfam" id="PF01775">
    <property type="entry name" value="Ribosomal_L18A"/>
    <property type="match status" value="1"/>
</dbReference>
<dbReference type="SUPFAM" id="SSF160374">
    <property type="entry name" value="RplX-like"/>
    <property type="match status" value="1"/>
</dbReference>
<comment type="subunit">
    <text evidence="1">Part of the 50S ribosomal subunit. Binds 23S rRNA.</text>
</comment>
<comment type="similarity">
    <text evidence="1">Belongs to the eukaryotic ribosomal protein eL20 family.</text>
</comment>
<organism>
    <name type="scientific">Halorhabdus utahensis (strain DSM 12940 / JCM 11049 / AX-2)</name>
    <dbReference type="NCBI Taxonomy" id="519442"/>
    <lineage>
        <taxon>Archaea</taxon>
        <taxon>Methanobacteriati</taxon>
        <taxon>Methanobacteriota</taxon>
        <taxon>Stenosarchaea group</taxon>
        <taxon>Halobacteria</taxon>
        <taxon>Halobacteriales</taxon>
        <taxon>Haloarculaceae</taxon>
        <taxon>Halorhabdus</taxon>
    </lineage>
</organism>
<accession>C7NNA6</accession>
<reference key="1">
    <citation type="journal article" date="2009" name="Stand. Genomic Sci.">
        <title>Complete genome sequence of Halorhabdus utahensis type strain (AX-2).</title>
        <authorList>
            <person name="Anderson I."/>
            <person name="Tindall B.J."/>
            <person name="Pomrenke H."/>
            <person name="Goker M."/>
            <person name="Lapidus A."/>
            <person name="Nolan M."/>
            <person name="Copeland A."/>
            <person name="Glavina Del Rio T."/>
            <person name="Chen F."/>
            <person name="Tice H."/>
            <person name="Cheng J.F."/>
            <person name="Lucas S."/>
            <person name="Chertkov O."/>
            <person name="Bruce D."/>
            <person name="Brettin T."/>
            <person name="Detter J.C."/>
            <person name="Han C."/>
            <person name="Goodwin L."/>
            <person name="Land M."/>
            <person name="Hauser L."/>
            <person name="Chang Y.J."/>
            <person name="Jeffries C.D."/>
            <person name="Pitluck S."/>
            <person name="Pati A."/>
            <person name="Mavromatis K."/>
            <person name="Ivanova N."/>
            <person name="Ovchinnikova G."/>
            <person name="Chen A."/>
            <person name="Palaniappan K."/>
            <person name="Chain P."/>
            <person name="Rohde M."/>
            <person name="Bristow J."/>
            <person name="Eisen J.A."/>
            <person name="Markowitz V."/>
            <person name="Hugenholtz P."/>
            <person name="Kyrpides N.C."/>
            <person name="Klenk H.P."/>
        </authorList>
    </citation>
    <scope>NUCLEOTIDE SEQUENCE [LARGE SCALE GENOMIC DNA]</scope>
    <source>
        <strain>DSM 12940 / JCM 11049 / AX-2</strain>
    </source>
</reference>
<protein>
    <recommendedName>
        <fullName evidence="1">Large ribosomal subunit protein eL20</fullName>
    </recommendedName>
    <alternativeName>
        <fullName evidence="2">50S ribosomal protein L18Ae</fullName>
    </alternativeName>
    <alternativeName>
        <fullName evidence="1">50S ribosomal protein L20e</fullName>
    </alternativeName>
    <alternativeName>
        <fullName evidence="1">50S ribosomal protein LX</fullName>
    </alternativeName>
</protein>
<gene>
    <name evidence="1" type="primary">rpl18a</name>
    <name evidence="1" type="synonym">rpl20e</name>
    <name evidence="1" type="synonym">rplX</name>
    <name type="ordered locus">Huta_1330</name>
</gene>
<feature type="chain" id="PRO_0000419090" description="Large ribosomal subunit protein eL20">
    <location>
        <begin position="1"/>
        <end position="57"/>
    </location>
</feature>
<sequence length="57" mass="6386">MSEYTVTGTFQARDGWQSFETEIEAPNENVAEEHTLAEFGSQHGLKRTQIEIEGVDA</sequence>
<evidence type="ECO:0000255" key="1">
    <source>
        <dbReference type="HAMAP-Rule" id="MF_00273"/>
    </source>
</evidence>
<evidence type="ECO:0000305" key="2"/>
<keyword id="KW-1185">Reference proteome</keyword>
<keyword id="KW-0687">Ribonucleoprotein</keyword>
<keyword id="KW-0689">Ribosomal protein</keyword>
<keyword id="KW-0694">RNA-binding</keyword>
<keyword id="KW-0699">rRNA-binding</keyword>